<evidence type="ECO:0000255" key="1">
    <source>
        <dbReference type="HAMAP-Rule" id="MF_01855"/>
    </source>
</evidence>
<name>F16PA_ECTM1</name>
<keyword id="KW-0119">Carbohydrate metabolism</keyword>
<keyword id="KW-0963">Cytoplasm</keyword>
<keyword id="KW-0378">Hydrolase</keyword>
<keyword id="KW-0460">Magnesium</keyword>
<keyword id="KW-0479">Metal-binding</keyword>
<reference key="1">
    <citation type="submission" date="2007-04" db="EMBL/GenBank/DDBJ databases">
        <title>Complete sequence of Pseudomonas mendocina ymp.</title>
        <authorList>
            <consortium name="US DOE Joint Genome Institute"/>
            <person name="Copeland A."/>
            <person name="Lucas S."/>
            <person name="Lapidus A."/>
            <person name="Barry K."/>
            <person name="Glavina del Rio T."/>
            <person name="Dalin E."/>
            <person name="Tice H."/>
            <person name="Pitluck S."/>
            <person name="Kiss H."/>
            <person name="Brettin T."/>
            <person name="Detter J.C."/>
            <person name="Bruce D."/>
            <person name="Han C."/>
            <person name="Schmutz J."/>
            <person name="Larimer F."/>
            <person name="Land M."/>
            <person name="Hauser L."/>
            <person name="Kyrpides N."/>
            <person name="Mikhailova N."/>
            <person name="Hersman L."/>
            <person name="Dubois J."/>
            <person name="Maurice P."/>
            <person name="Richardson P."/>
        </authorList>
    </citation>
    <scope>NUCLEOTIDE SEQUENCE [LARGE SCALE GENOMIC DNA]</scope>
    <source>
        <strain>ymp</strain>
    </source>
</reference>
<accession>A4XPL2</accession>
<organism>
    <name type="scientific">Ectopseudomonas mendocina (strain ymp)</name>
    <name type="common">Pseudomonas mendocina</name>
    <dbReference type="NCBI Taxonomy" id="399739"/>
    <lineage>
        <taxon>Bacteria</taxon>
        <taxon>Pseudomonadati</taxon>
        <taxon>Pseudomonadota</taxon>
        <taxon>Gammaproteobacteria</taxon>
        <taxon>Pseudomonadales</taxon>
        <taxon>Pseudomonadaceae</taxon>
        <taxon>Ectopseudomonas</taxon>
    </lineage>
</organism>
<protein>
    <recommendedName>
        <fullName evidence="1">Fructose-1,6-bisphosphatase class 1</fullName>
        <shortName evidence="1">FBPase class 1</shortName>
        <ecNumber evidence="1">3.1.3.11</ecNumber>
    </recommendedName>
    <alternativeName>
        <fullName evidence="1">D-fructose-1,6-bisphosphate 1-phosphohydrolase class 1</fullName>
    </alternativeName>
</protein>
<sequence length="335" mass="36792">MSRVTLSRYLIEQTRSHNTPADLRFLIEVVARACKAISHQVSKGALGGVLGSLDSENVQGEVQKKLDVISNEILLEANEWGGHLAGMASEEMDNAYQIPGKYPKGAYLLVFDPLDGSSNIDVNVSVGTIFSVLRCPDRNGDTGDLGEDAFLQPGTQQVAAGYAIYGPQTMLMLTLGDGVKGFTLDRELGSFVLTHDNIKVPESTKEFAINMSNQRHWEAPVQRYVSELLAGETGPLGRNYNMRWIASMVADVHRILTRGGVFMYPRDAREPDKPGKLRLMYEANPMSMIIEQAGGAATDGSQRILDIQPTSLHQRVPVFLGSKEEVLRVTAYHRG</sequence>
<gene>
    <name evidence="1" type="primary">fbp</name>
    <name type="ordered locus">Pmen_0508</name>
</gene>
<comment type="catalytic activity">
    <reaction evidence="1">
        <text>beta-D-fructose 1,6-bisphosphate + H2O = beta-D-fructose 6-phosphate + phosphate</text>
        <dbReference type="Rhea" id="RHEA:11064"/>
        <dbReference type="ChEBI" id="CHEBI:15377"/>
        <dbReference type="ChEBI" id="CHEBI:32966"/>
        <dbReference type="ChEBI" id="CHEBI:43474"/>
        <dbReference type="ChEBI" id="CHEBI:57634"/>
        <dbReference type="EC" id="3.1.3.11"/>
    </reaction>
</comment>
<comment type="cofactor">
    <cofactor evidence="1">
        <name>Mg(2+)</name>
        <dbReference type="ChEBI" id="CHEBI:18420"/>
    </cofactor>
    <text evidence="1">Binds 2 magnesium ions per subunit.</text>
</comment>
<comment type="pathway">
    <text evidence="1">Carbohydrate biosynthesis; gluconeogenesis.</text>
</comment>
<comment type="subunit">
    <text evidence="1">Homotetramer.</text>
</comment>
<comment type="subcellular location">
    <subcellularLocation>
        <location evidence="1">Cytoplasm</location>
    </subcellularLocation>
</comment>
<comment type="similarity">
    <text evidence="1">Belongs to the FBPase class 1 family.</text>
</comment>
<feature type="chain" id="PRO_0000364647" description="Fructose-1,6-bisphosphatase class 1">
    <location>
        <begin position="1"/>
        <end position="335"/>
    </location>
</feature>
<feature type="binding site" evidence="1">
    <location>
        <position position="90"/>
    </location>
    <ligand>
        <name>Mg(2+)</name>
        <dbReference type="ChEBI" id="CHEBI:18420"/>
        <label>1</label>
    </ligand>
</feature>
<feature type="binding site" evidence="1">
    <location>
        <position position="112"/>
    </location>
    <ligand>
        <name>Mg(2+)</name>
        <dbReference type="ChEBI" id="CHEBI:18420"/>
        <label>1</label>
    </ligand>
</feature>
<feature type="binding site" evidence="1">
    <location>
        <position position="112"/>
    </location>
    <ligand>
        <name>Mg(2+)</name>
        <dbReference type="ChEBI" id="CHEBI:18420"/>
        <label>2</label>
    </ligand>
</feature>
<feature type="binding site" evidence="1">
    <location>
        <position position="114"/>
    </location>
    <ligand>
        <name>Mg(2+)</name>
        <dbReference type="ChEBI" id="CHEBI:18420"/>
        <label>1</label>
    </ligand>
</feature>
<feature type="binding site" evidence="1">
    <location>
        <begin position="115"/>
        <end position="118"/>
    </location>
    <ligand>
        <name>substrate</name>
    </ligand>
</feature>
<feature type="binding site" evidence="1">
    <location>
        <position position="115"/>
    </location>
    <ligand>
        <name>Mg(2+)</name>
        <dbReference type="ChEBI" id="CHEBI:18420"/>
        <label>2</label>
    </ligand>
</feature>
<feature type="binding site" evidence="1">
    <location>
        <position position="210"/>
    </location>
    <ligand>
        <name>substrate</name>
    </ligand>
</feature>
<feature type="binding site" evidence="1">
    <location>
        <position position="276"/>
    </location>
    <ligand>
        <name>substrate</name>
    </ligand>
</feature>
<feature type="binding site" evidence="1">
    <location>
        <position position="282"/>
    </location>
    <ligand>
        <name>Mg(2+)</name>
        <dbReference type="ChEBI" id="CHEBI:18420"/>
        <label>2</label>
    </ligand>
</feature>
<dbReference type="EC" id="3.1.3.11" evidence="1"/>
<dbReference type="EMBL" id="CP000680">
    <property type="protein sequence ID" value="ABP83278.1"/>
    <property type="molecule type" value="Genomic_DNA"/>
</dbReference>
<dbReference type="SMR" id="A4XPL2"/>
<dbReference type="STRING" id="399739.Pmen_0508"/>
<dbReference type="KEGG" id="pmy:Pmen_0508"/>
<dbReference type="PATRIC" id="fig|399739.8.peg.516"/>
<dbReference type="eggNOG" id="COG0158">
    <property type="taxonomic scope" value="Bacteria"/>
</dbReference>
<dbReference type="HOGENOM" id="CLU_039977_0_0_6"/>
<dbReference type="OrthoDB" id="9806756at2"/>
<dbReference type="UniPathway" id="UPA00138"/>
<dbReference type="GO" id="GO:0005829">
    <property type="term" value="C:cytosol"/>
    <property type="evidence" value="ECO:0007669"/>
    <property type="project" value="TreeGrafter"/>
</dbReference>
<dbReference type="GO" id="GO:0042132">
    <property type="term" value="F:fructose 1,6-bisphosphate 1-phosphatase activity"/>
    <property type="evidence" value="ECO:0007669"/>
    <property type="project" value="UniProtKB-UniRule"/>
</dbReference>
<dbReference type="GO" id="GO:0000287">
    <property type="term" value="F:magnesium ion binding"/>
    <property type="evidence" value="ECO:0007669"/>
    <property type="project" value="UniProtKB-UniRule"/>
</dbReference>
<dbReference type="GO" id="GO:0030388">
    <property type="term" value="P:fructose 1,6-bisphosphate metabolic process"/>
    <property type="evidence" value="ECO:0007669"/>
    <property type="project" value="TreeGrafter"/>
</dbReference>
<dbReference type="GO" id="GO:0006002">
    <property type="term" value="P:fructose 6-phosphate metabolic process"/>
    <property type="evidence" value="ECO:0007669"/>
    <property type="project" value="TreeGrafter"/>
</dbReference>
<dbReference type="GO" id="GO:0006000">
    <property type="term" value="P:fructose metabolic process"/>
    <property type="evidence" value="ECO:0007669"/>
    <property type="project" value="TreeGrafter"/>
</dbReference>
<dbReference type="GO" id="GO:0006094">
    <property type="term" value="P:gluconeogenesis"/>
    <property type="evidence" value="ECO:0007669"/>
    <property type="project" value="UniProtKB-UniRule"/>
</dbReference>
<dbReference type="GO" id="GO:0005986">
    <property type="term" value="P:sucrose biosynthetic process"/>
    <property type="evidence" value="ECO:0007669"/>
    <property type="project" value="TreeGrafter"/>
</dbReference>
<dbReference type="CDD" id="cd00354">
    <property type="entry name" value="FBPase"/>
    <property type="match status" value="1"/>
</dbReference>
<dbReference type="FunFam" id="3.30.540.10:FF:000006">
    <property type="entry name" value="Fructose-1,6-bisphosphatase class 1"/>
    <property type="match status" value="1"/>
</dbReference>
<dbReference type="FunFam" id="3.40.190.80:FF:000011">
    <property type="entry name" value="Fructose-1,6-bisphosphatase class 1"/>
    <property type="match status" value="1"/>
</dbReference>
<dbReference type="Gene3D" id="3.40.190.80">
    <property type="match status" value="1"/>
</dbReference>
<dbReference type="Gene3D" id="3.30.540.10">
    <property type="entry name" value="Fructose-1,6-Bisphosphatase, subunit A, domain 1"/>
    <property type="match status" value="1"/>
</dbReference>
<dbReference type="HAMAP" id="MF_01855">
    <property type="entry name" value="FBPase_class1"/>
    <property type="match status" value="1"/>
</dbReference>
<dbReference type="InterPro" id="IPR044015">
    <property type="entry name" value="FBPase_C_dom"/>
</dbReference>
<dbReference type="InterPro" id="IPR000146">
    <property type="entry name" value="FBPase_class-1"/>
</dbReference>
<dbReference type="InterPro" id="IPR033391">
    <property type="entry name" value="FBPase_N"/>
</dbReference>
<dbReference type="InterPro" id="IPR028343">
    <property type="entry name" value="FBPtase"/>
</dbReference>
<dbReference type="NCBIfam" id="NF006778">
    <property type="entry name" value="PRK09293.1-1"/>
    <property type="match status" value="1"/>
</dbReference>
<dbReference type="NCBIfam" id="NF006779">
    <property type="entry name" value="PRK09293.1-3"/>
    <property type="match status" value="1"/>
</dbReference>
<dbReference type="NCBIfam" id="NF006780">
    <property type="entry name" value="PRK09293.1-4"/>
    <property type="match status" value="1"/>
</dbReference>
<dbReference type="PANTHER" id="PTHR11556">
    <property type="entry name" value="FRUCTOSE-1,6-BISPHOSPHATASE-RELATED"/>
    <property type="match status" value="1"/>
</dbReference>
<dbReference type="PANTHER" id="PTHR11556:SF35">
    <property type="entry name" value="SEDOHEPTULOSE-1,7-BISPHOSPHATASE, CHLOROPLASTIC"/>
    <property type="match status" value="1"/>
</dbReference>
<dbReference type="Pfam" id="PF00316">
    <property type="entry name" value="FBPase"/>
    <property type="match status" value="1"/>
</dbReference>
<dbReference type="Pfam" id="PF18913">
    <property type="entry name" value="FBPase_C"/>
    <property type="match status" value="1"/>
</dbReference>
<dbReference type="PIRSF" id="PIRSF500210">
    <property type="entry name" value="FBPtase"/>
    <property type="match status" value="1"/>
</dbReference>
<dbReference type="PIRSF" id="PIRSF000904">
    <property type="entry name" value="FBPtase_SBPase"/>
    <property type="match status" value="1"/>
</dbReference>
<dbReference type="PRINTS" id="PR00115">
    <property type="entry name" value="F16BPHPHTASE"/>
</dbReference>
<dbReference type="SUPFAM" id="SSF56655">
    <property type="entry name" value="Carbohydrate phosphatase"/>
    <property type="match status" value="1"/>
</dbReference>
<proteinExistence type="inferred from homology"/>